<organism>
    <name type="scientific">Rattus norvegicus</name>
    <name type="common">Rat</name>
    <dbReference type="NCBI Taxonomy" id="10116"/>
    <lineage>
        <taxon>Eukaryota</taxon>
        <taxon>Metazoa</taxon>
        <taxon>Chordata</taxon>
        <taxon>Craniata</taxon>
        <taxon>Vertebrata</taxon>
        <taxon>Euteleostomi</taxon>
        <taxon>Mammalia</taxon>
        <taxon>Eutheria</taxon>
        <taxon>Euarchontoglires</taxon>
        <taxon>Glires</taxon>
        <taxon>Rodentia</taxon>
        <taxon>Myomorpha</taxon>
        <taxon>Muroidea</taxon>
        <taxon>Muridae</taxon>
        <taxon>Murinae</taxon>
        <taxon>Rattus</taxon>
    </lineage>
</organism>
<accession>Q5XIR4</accession>
<sequence>MGRQKTKVPEEPQDRLDTSLDPYPDTNYLAPCNKETVMVTLYGATNLPTCKDSSEPWPYVVVKTTSEEANNHSPQARTSVTSEPTRAPIWGDTVNVEIQAEDTGREDVTLKVMDSNKKEELVSYEIPIKYLRAFHPYHFELKKNEKEDEATAKTRLYATVVRKGSLLPRYIGYDHTALEVFLRGVNEPLVNNPSPMVVIARVVPSYTEFKARKARQDPASVGLPLTQVSFPISSPMTFDVPRVSQNGCPQLSKPGGPPEQPLWNQSFLFLGRDGATSFSEDTALVLEYYPSASMKSSEPWTLNQPLGVSVLPLKSHLYRKMLTGKGLKGLQVERLPIFDTNLKTINGEAPSVNLAFQLLSSERPENFLTPNNSKTLPTLNPKILDENLGAIRESWSVSSLDSSQEAEELQPRDVEMNNYRRAMQKMAEDILALRKQANILEEENRMLRSHLTQQSIEEEQNRAEEENLAVSMKQRLLLNELDMKRLRDRVQHLQNELIRKNDREKELLLLYQAQQPQAAQLRRYQDKLQKMKGLEDTVRHQEKVIEKMEQILEERLHERKEPAPSNRPQGKPIMDAFAPQASGIPLGPAGENLAMDLYSMLLAENTRLRTELEKNRQQSAPIILQQQALPVDPGELGAGGDLAERLQDTNGPGHSKYTETMPAQDFLGGTSDKFSLLAKLEQAQSRILSLENQLEESARHWAREKQNLAIRLQEQQHGFGQSPNSIIVDQPHFARSQGSTTPRQNLKDEGYPGNIERPLQTHLTPGTRDIRHHLR</sequence>
<reference key="1">
    <citation type="journal article" date="2004" name="Genome Res.">
        <title>The status, quality, and expansion of the NIH full-length cDNA project: the Mammalian Gene Collection (MGC).</title>
        <authorList>
            <consortium name="The MGC Project Team"/>
        </authorList>
    </citation>
    <scope>NUCLEOTIDE SEQUENCE [LARGE SCALE MRNA]</scope>
    <source>
        <tissue>Testis</tissue>
    </source>
</reference>
<gene>
    <name type="primary">Ccdc33</name>
</gene>
<name>CCD33_RAT</name>
<evidence type="ECO:0000255" key="1"/>
<evidence type="ECO:0000255" key="2">
    <source>
        <dbReference type="PROSITE-ProRule" id="PRU00041"/>
    </source>
</evidence>
<evidence type="ECO:0000256" key="3">
    <source>
        <dbReference type="SAM" id="MobiDB-lite"/>
    </source>
</evidence>
<dbReference type="EMBL" id="BC083609">
    <property type="protein sequence ID" value="AAH83609.1"/>
    <property type="molecule type" value="mRNA"/>
</dbReference>
<dbReference type="RefSeq" id="NP_001014113.1">
    <property type="nucleotide sequence ID" value="NM_001014091.2"/>
</dbReference>
<dbReference type="SMR" id="Q5XIR4"/>
<dbReference type="FunCoup" id="Q5XIR4">
    <property type="interactions" value="38"/>
</dbReference>
<dbReference type="STRING" id="10116.ENSRNOP00000055287"/>
<dbReference type="PhosphoSitePlus" id="Q5XIR4"/>
<dbReference type="PaxDb" id="10116-ENSRNOP00000055287"/>
<dbReference type="Ensembl" id="ENSRNOT00000058490.3">
    <property type="protein sequence ID" value="ENSRNOP00000055287.2"/>
    <property type="gene ID" value="ENSRNOG00000008219.7"/>
</dbReference>
<dbReference type="GeneID" id="315712"/>
<dbReference type="KEGG" id="rno:315712"/>
<dbReference type="UCSC" id="RGD:1561126">
    <property type="organism name" value="rat"/>
</dbReference>
<dbReference type="AGR" id="RGD:1561126"/>
<dbReference type="CTD" id="80125"/>
<dbReference type="RGD" id="1561126">
    <property type="gene designation" value="Ccdc33"/>
</dbReference>
<dbReference type="eggNOG" id="KOG3544">
    <property type="taxonomic scope" value="Eukaryota"/>
</dbReference>
<dbReference type="GeneTree" id="ENSGT00390000017366"/>
<dbReference type="HOGENOM" id="CLU_014242_0_0_1"/>
<dbReference type="InParanoid" id="Q5XIR4"/>
<dbReference type="PhylomeDB" id="Q5XIR4"/>
<dbReference type="PRO" id="PR:Q5XIR4"/>
<dbReference type="Proteomes" id="UP000002494">
    <property type="component" value="Chromosome 8"/>
</dbReference>
<dbReference type="Bgee" id="ENSRNOG00000008219">
    <property type="expression patterns" value="Expressed in testis and 4 other cell types or tissues"/>
</dbReference>
<dbReference type="GO" id="GO:0005777">
    <property type="term" value="C:peroxisome"/>
    <property type="evidence" value="ECO:0000266"/>
    <property type="project" value="RGD"/>
</dbReference>
<dbReference type="CDD" id="cd00030">
    <property type="entry name" value="C2"/>
    <property type="match status" value="1"/>
</dbReference>
<dbReference type="Gene3D" id="2.60.40.150">
    <property type="entry name" value="C2 domain"/>
    <property type="match status" value="1"/>
</dbReference>
<dbReference type="InterPro" id="IPR000008">
    <property type="entry name" value="C2_dom"/>
</dbReference>
<dbReference type="InterPro" id="IPR035892">
    <property type="entry name" value="C2_domain_sf"/>
</dbReference>
<dbReference type="InterPro" id="IPR039889">
    <property type="entry name" value="CCD33"/>
</dbReference>
<dbReference type="PANTHER" id="PTHR21623:SF2">
    <property type="entry name" value="COILED-COIL DOMAIN-CONTAINING PROTEIN 33"/>
    <property type="match status" value="1"/>
</dbReference>
<dbReference type="PANTHER" id="PTHR21623">
    <property type="entry name" value="SPERIOLIN-BINDING FACTOR"/>
    <property type="match status" value="1"/>
</dbReference>
<dbReference type="Pfam" id="PF00168">
    <property type="entry name" value="C2"/>
    <property type="match status" value="1"/>
</dbReference>
<dbReference type="SMART" id="SM00239">
    <property type="entry name" value="C2"/>
    <property type="match status" value="1"/>
</dbReference>
<dbReference type="SUPFAM" id="SSF49562">
    <property type="entry name" value="C2 domain (Calcium/lipid-binding domain, CaLB)"/>
    <property type="match status" value="1"/>
</dbReference>
<dbReference type="PROSITE" id="PS50004">
    <property type="entry name" value="C2"/>
    <property type="match status" value="1"/>
</dbReference>
<keyword id="KW-0175">Coiled coil</keyword>
<keyword id="KW-1185">Reference proteome</keyword>
<feature type="chain" id="PRO_0000307645" description="Coiled-coil domain-containing protein 33">
    <location>
        <begin position="1"/>
        <end position="775"/>
    </location>
</feature>
<feature type="domain" description="C2" evidence="2">
    <location>
        <begin position="12"/>
        <end position="141"/>
    </location>
</feature>
<feature type="region of interest" description="Disordered" evidence="3">
    <location>
        <begin position="1"/>
        <end position="23"/>
    </location>
</feature>
<feature type="region of interest" description="Disordered" evidence="3">
    <location>
        <begin position="68"/>
        <end position="87"/>
    </location>
</feature>
<feature type="region of interest" description="Disordered" evidence="3">
    <location>
        <begin position="735"/>
        <end position="775"/>
    </location>
</feature>
<feature type="coiled-coil region" evidence="1">
    <location>
        <begin position="414"/>
        <end position="561"/>
    </location>
</feature>
<feature type="coiled-coil region" evidence="1">
    <location>
        <begin position="672"/>
        <end position="715"/>
    </location>
</feature>
<feature type="compositionally biased region" description="Basic and acidic residues" evidence="3">
    <location>
        <begin position="7"/>
        <end position="18"/>
    </location>
</feature>
<feature type="compositionally biased region" description="Polar residues" evidence="3">
    <location>
        <begin position="71"/>
        <end position="84"/>
    </location>
</feature>
<protein>
    <recommendedName>
        <fullName>Coiled-coil domain-containing protein 33</fullName>
    </recommendedName>
</protein>
<proteinExistence type="evidence at transcript level"/>